<feature type="chain" id="PRO_0000434000" description="Serine/threonine-protein kinase STY46">
    <location>
        <begin position="1"/>
        <end position="575"/>
    </location>
</feature>
<feature type="domain" description="ACT" evidence="2">
    <location>
        <begin position="178"/>
        <end position="252"/>
    </location>
</feature>
<feature type="domain" description="Protein kinase" evidence="1">
    <location>
        <begin position="290"/>
        <end position="543"/>
    </location>
</feature>
<feature type="region of interest" description="Disordered" evidence="3">
    <location>
        <begin position="116"/>
        <end position="140"/>
    </location>
</feature>
<feature type="compositionally biased region" description="Polar residues" evidence="3">
    <location>
        <begin position="118"/>
        <end position="132"/>
    </location>
</feature>
<feature type="active site" description="Proton acceptor" evidence="1">
    <location>
        <position position="411"/>
    </location>
</feature>
<feature type="binding site" evidence="1">
    <location>
        <begin position="296"/>
        <end position="304"/>
    </location>
    <ligand>
        <name>ATP</name>
        <dbReference type="ChEBI" id="CHEBI:30616"/>
    </ligand>
</feature>
<feature type="binding site" evidence="1">
    <location>
        <position position="317"/>
    </location>
    <ligand>
        <name>ATP</name>
        <dbReference type="ChEBI" id="CHEBI:30616"/>
    </ligand>
</feature>
<feature type="modified residue" description="Phosphothreonine" evidence="5 10 11 12">
    <location>
        <position position="443"/>
    </location>
</feature>
<feature type="mutagenesis site" description="Loss of autophosphorylation and enzyme activation." evidence="5">
    <original>T</original>
    <variation>A</variation>
    <location>
        <position position="443"/>
    </location>
</feature>
<comment type="function">
    <text evidence="4 5">Serine/threonine protein kinase that specifically phosphorylates chloroplast precursor proteins in the cytosol within the cleavable presequences (transit peptides). May be part of a cytosolic regulatory network involved in chloroplast protein import. Does not phosphorylate mitochondrion precursor proteins. Specific for ATP and does not utilize other NTPs (PubMed:16429265, PubMed:17090544). Plays a role in chloroplast biogenesis and differentiation in cotyledons, possibly through phosphorylation of chloroplast preproteins (PubMed:21799034).</text>
</comment>
<comment type="catalytic activity">
    <reaction evidence="4">
        <text>L-seryl-[protein] + ATP = O-phospho-L-seryl-[protein] + ADP + H(+)</text>
        <dbReference type="Rhea" id="RHEA:17989"/>
        <dbReference type="Rhea" id="RHEA-COMP:9863"/>
        <dbReference type="Rhea" id="RHEA-COMP:11604"/>
        <dbReference type="ChEBI" id="CHEBI:15378"/>
        <dbReference type="ChEBI" id="CHEBI:29999"/>
        <dbReference type="ChEBI" id="CHEBI:30616"/>
        <dbReference type="ChEBI" id="CHEBI:83421"/>
        <dbReference type="ChEBI" id="CHEBI:456216"/>
        <dbReference type="EC" id="2.7.11.1"/>
    </reaction>
</comment>
<comment type="catalytic activity">
    <reaction evidence="4">
        <text>L-threonyl-[protein] + ATP = O-phospho-L-threonyl-[protein] + ADP + H(+)</text>
        <dbReference type="Rhea" id="RHEA:46608"/>
        <dbReference type="Rhea" id="RHEA-COMP:11060"/>
        <dbReference type="Rhea" id="RHEA-COMP:11605"/>
        <dbReference type="ChEBI" id="CHEBI:15378"/>
        <dbReference type="ChEBI" id="CHEBI:30013"/>
        <dbReference type="ChEBI" id="CHEBI:30616"/>
        <dbReference type="ChEBI" id="CHEBI:61977"/>
        <dbReference type="ChEBI" id="CHEBI:456216"/>
        <dbReference type="EC" id="2.7.11.1"/>
    </reaction>
</comment>
<comment type="activity regulation">
    <text evidence="5">Activated by autophosphorylation at Thr-443.</text>
</comment>
<comment type="biophysicochemical properties">
    <kinetics>
        <KM evidence="4">67 uM for ATP</KM>
    </kinetics>
</comment>
<comment type="subcellular location">
    <subcellularLocation>
        <location evidence="5">Cytoplasm</location>
        <location evidence="5">Cytosol</location>
    </subcellularLocation>
</comment>
<comment type="PTM">
    <text evidence="4 5">Autophosphorylated on serine and threonine residues. Autophosphorylated at Thr-443.</text>
</comment>
<comment type="disruption phenotype">
    <text evidence="5">Retarded growth.</text>
</comment>
<comment type="similarity">
    <text evidence="1">Belongs to the protein kinase superfamily. Ser/Thr protein kinase family.</text>
</comment>
<comment type="sequence caution" evidence="7">
    <conflict type="erroneous initiation">
        <sequence resource="EMBL-CDS" id="BAD94956"/>
    </conflict>
    <text>Truncated N-terminus.</text>
</comment>
<comment type="sequence caution" evidence="7">
    <conflict type="erroneous gene model prediction">
        <sequence resource="EMBL-CDS" id="CAB37503"/>
    </conflict>
</comment>
<comment type="sequence caution" evidence="7">
    <conflict type="erroneous gene model prediction">
        <sequence resource="EMBL-CDS" id="CAB80511"/>
    </conflict>
</comment>
<reference key="1">
    <citation type="journal article" date="1999" name="Nature">
        <title>Sequence and analysis of chromosome 4 of the plant Arabidopsis thaliana.</title>
        <authorList>
            <person name="Mayer K.F.X."/>
            <person name="Schueller C."/>
            <person name="Wambutt R."/>
            <person name="Murphy G."/>
            <person name="Volckaert G."/>
            <person name="Pohl T."/>
            <person name="Duesterhoeft A."/>
            <person name="Stiekema W."/>
            <person name="Entian K.-D."/>
            <person name="Terryn N."/>
            <person name="Harris B."/>
            <person name="Ansorge W."/>
            <person name="Brandt P."/>
            <person name="Grivell L.A."/>
            <person name="Rieger M."/>
            <person name="Weichselgartner M."/>
            <person name="de Simone V."/>
            <person name="Obermaier B."/>
            <person name="Mache R."/>
            <person name="Mueller M."/>
            <person name="Kreis M."/>
            <person name="Delseny M."/>
            <person name="Puigdomenech P."/>
            <person name="Watson M."/>
            <person name="Schmidtheini T."/>
            <person name="Reichert B."/>
            <person name="Portetelle D."/>
            <person name="Perez-Alonso M."/>
            <person name="Boutry M."/>
            <person name="Bancroft I."/>
            <person name="Vos P."/>
            <person name="Hoheisel J."/>
            <person name="Zimmermann W."/>
            <person name="Wedler H."/>
            <person name="Ridley P."/>
            <person name="Langham S.-A."/>
            <person name="McCullagh B."/>
            <person name="Bilham L."/>
            <person name="Robben J."/>
            <person name="van der Schueren J."/>
            <person name="Grymonprez B."/>
            <person name="Chuang Y.-J."/>
            <person name="Vandenbussche F."/>
            <person name="Braeken M."/>
            <person name="Weltjens I."/>
            <person name="Voet M."/>
            <person name="Bastiaens I."/>
            <person name="Aert R."/>
            <person name="Defoor E."/>
            <person name="Weitzenegger T."/>
            <person name="Bothe G."/>
            <person name="Ramsperger U."/>
            <person name="Hilbert H."/>
            <person name="Braun M."/>
            <person name="Holzer E."/>
            <person name="Brandt A."/>
            <person name="Peters S."/>
            <person name="van Staveren M."/>
            <person name="Dirkse W."/>
            <person name="Mooijman P."/>
            <person name="Klein Lankhorst R."/>
            <person name="Rose M."/>
            <person name="Hauf J."/>
            <person name="Koetter P."/>
            <person name="Berneiser S."/>
            <person name="Hempel S."/>
            <person name="Feldpausch M."/>
            <person name="Lamberth S."/>
            <person name="Van den Daele H."/>
            <person name="De Keyser A."/>
            <person name="Buysshaert C."/>
            <person name="Gielen J."/>
            <person name="Villarroel R."/>
            <person name="De Clercq R."/>
            <person name="van Montagu M."/>
            <person name="Rogers J."/>
            <person name="Cronin A."/>
            <person name="Quail M.A."/>
            <person name="Bray-Allen S."/>
            <person name="Clark L."/>
            <person name="Doggett J."/>
            <person name="Hall S."/>
            <person name="Kay M."/>
            <person name="Lennard N."/>
            <person name="McLay K."/>
            <person name="Mayes R."/>
            <person name="Pettett A."/>
            <person name="Rajandream M.A."/>
            <person name="Lyne M."/>
            <person name="Benes V."/>
            <person name="Rechmann S."/>
            <person name="Borkova D."/>
            <person name="Bloecker H."/>
            <person name="Scharfe M."/>
            <person name="Grimm M."/>
            <person name="Loehnert T.-H."/>
            <person name="Dose S."/>
            <person name="de Haan M."/>
            <person name="Maarse A.C."/>
            <person name="Schaefer M."/>
            <person name="Mueller-Auer S."/>
            <person name="Gabel C."/>
            <person name="Fuchs M."/>
            <person name="Fartmann B."/>
            <person name="Granderath K."/>
            <person name="Dauner D."/>
            <person name="Herzl A."/>
            <person name="Neumann S."/>
            <person name="Argiriou A."/>
            <person name="Vitale D."/>
            <person name="Liguori R."/>
            <person name="Piravandi E."/>
            <person name="Massenet O."/>
            <person name="Quigley F."/>
            <person name="Clabauld G."/>
            <person name="Muendlein A."/>
            <person name="Felber R."/>
            <person name="Schnabl S."/>
            <person name="Hiller R."/>
            <person name="Schmidt W."/>
            <person name="Lecharny A."/>
            <person name="Aubourg S."/>
            <person name="Chefdor F."/>
            <person name="Cooke R."/>
            <person name="Berger C."/>
            <person name="Monfort A."/>
            <person name="Casacuberta E."/>
            <person name="Gibbons T."/>
            <person name="Weber N."/>
            <person name="Vandenbol M."/>
            <person name="Bargues M."/>
            <person name="Terol J."/>
            <person name="Torres A."/>
            <person name="Perez-Perez A."/>
            <person name="Purnelle B."/>
            <person name="Bent E."/>
            <person name="Johnson S."/>
            <person name="Tacon D."/>
            <person name="Jesse T."/>
            <person name="Heijnen L."/>
            <person name="Schwarz S."/>
            <person name="Scholler P."/>
            <person name="Heber S."/>
            <person name="Francs P."/>
            <person name="Bielke C."/>
            <person name="Frishman D."/>
            <person name="Haase D."/>
            <person name="Lemcke K."/>
            <person name="Mewes H.-W."/>
            <person name="Stocker S."/>
            <person name="Zaccaria P."/>
            <person name="Bevan M."/>
            <person name="Wilson R.K."/>
            <person name="de la Bastide M."/>
            <person name="Habermann K."/>
            <person name="Parnell L."/>
            <person name="Dedhia N."/>
            <person name="Gnoj L."/>
            <person name="Schutz K."/>
            <person name="Huang E."/>
            <person name="Spiegel L."/>
            <person name="Sekhon M."/>
            <person name="Murray J."/>
            <person name="Sheet P."/>
            <person name="Cordes M."/>
            <person name="Abu-Threideh J."/>
            <person name="Stoneking T."/>
            <person name="Kalicki J."/>
            <person name="Graves T."/>
            <person name="Harmon G."/>
            <person name="Edwards J."/>
            <person name="Latreille P."/>
            <person name="Courtney L."/>
            <person name="Cloud J."/>
            <person name="Abbott A."/>
            <person name="Scott K."/>
            <person name="Johnson D."/>
            <person name="Minx P."/>
            <person name="Bentley D."/>
            <person name="Fulton B."/>
            <person name="Miller N."/>
            <person name="Greco T."/>
            <person name="Kemp K."/>
            <person name="Kramer J."/>
            <person name="Fulton L."/>
            <person name="Mardis E."/>
            <person name="Dante M."/>
            <person name="Pepin K."/>
            <person name="Hillier L.W."/>
            <person name="Nelson J."/>
            <person name="Spieth J."/>
            <person name="Ryan E."/>
            <person name="Andrews S."/>
            <person name="Geisel C."/>
            <person name="Layman D."/>
            <person name="Du H."/>
            <person name="Ali J."/>
            <person name="Berghoff A."/>
            <person name="Jones K."/>
            <person name="Drone K."/>
            <person name="Cotton M."/>
            <person name="Joshu C."/>
            <person name="Antonoiu B."/>
            <person name="Zidanic M."/>
            <person name="Strong C."/>
            <person name="Sun H."/>
            <person name="Lamar B."/>
            <person name="Yordan C."/>
            <person name="Ma P."/>
            <person name="Zhong J."/>
            <person name="Preston R."/>
            <person name="Vil D."/>
            <person name="Shekher M."/>
            <person name="Matero A."/>
            <person name="Shah R."/>
            <person name="Swaby I.K."/>
            <person name="O'Shaughnessy A."/>
            <person name="Rodriguez M."/>
            <person name="Hoffman J."/>
            <person name="Till S."/>
            <person name="Granat S."/>
            <person name="Shohdy N."/>
            <person name="Hasegawa A."/>
            <person name="Hameed A."/>
            <person name="Lodhi M."/>
            <person name="Johnson A."/>
            <person name="Chen E."/>
            <person name="Marra M.A."/>
            <person name="Martienssen R."/>
            <person name="McCombie W.R."/>
        </authorList>
    </citation>
    <scope>NUCLEOTIDE SEQUENCE [LARGE SCALE GENOMIC DNA]</scope>
    <source>
        <strain>cv. Columbia</strain>
    </source>
</reference>
<reference key="2">
    <citation type="journal article" date="2017" name="Plant J.">
        <title>Araport11: a complete reannotation of the Arabidopsis thaliana reference genome.</title>
        <authorList>
            <person name="Cheng C.Y."/>
            <person name="Krishnakumar V."/>
            <person name="Chan A.P."/>
            <person name="Thibaud-Nissen F."/>
            <person name="Schobel S."/>
            <person name="Town C.D."/>
        </authorList>
    </citation>
    <scope>GENOME REANNOTATION</scope>
    <source>
        <strain>cv. Columbia</strain>
    </source>
</reference>
<reference key="3">
    <citation type="submission" date="2005-03" db="EMBL/GenBank/DDBJ databases">
        <title>Large-scale analysis of RIKEN Arabidopsis full-length (RAFL) cDNAs.</title>
        <authorList>
            <person name="Totoki Y."/>
            <person name="Seki M."/>
            <person name="Ishida J."/>
            <person name="Nakajima M."/>
            <person name="Enju A."/>
            <person name="Kamiya A."/>
            <person name="Narusaka M."/>
            <person name="Shin-i T."/>
            <person name="Nakagawa M."/>
            <person name="Sakamoto N."/>
            <person name="Oishi K."/>
            <person name="Kohara Y."/>
            <person name="Kobayashi M."/>
            <person name="Toyoda A."/>
            <person name="Sakaki Y."/>
            <person name="Sakurai T."/>
            <person name="Iida K."/>
            <person name="Akiyama K."/>
            <person name="Satou M."/>
            <person name="Toyoda T."/>
            <person name="Konagaya A."/>
            <person name="Carninci P."/>
            <person name="Kawai J."/>
            <person name="Hayashizaki Y."/>
            <person name="Shinozaki K."/>
        </authorList>
    </citation>
    <scope>NUCLEOTIDE SEQUENCE [LARGE SCALE MRNA] OF 422-575</scope>
    <source>
        <strain>cv. Columbia</strain>
    </source>
</reference>
<reference key="4">
    <citation type="journal article" date="2006" name="J. Biol. Chem.">
        <title>A protein kinase family in Arabidopsis phosphorylates chloroplast precursor proteins.</title>
        <authorList>
            <person name="Martin T."/>
            <person name="Sharma R."/>
            <person name="Sippel C."/>
            <person name="Waegemann K."/>
            <person name="Soll J."/>
            <person name="Vothknecht U.C."/>
        </authorList>
    </citation>
    <scope>FUNCTION</scope>
    <scope>CATALYTIC ACTIVITY</scope>
    <scope>BIOPHYSICOCHEMICAL PROPERTIES</scope>
    <scope>AUTOPHOSPHORYLATION</scope>
</reference>
<reference key="5">
    <citation type="journal article" date="2006" name="Plant Mol. Biol.">
        <title>Genome-wide analysis and experimentation of plant serine/threonine/tyrosine-specific protein kinases.</title>
        <authorList>
            <person name="Rudrabhatla P."/>
            <person name="Reddy M.M."/>
            <person name="Rajasekharan R."/>
        </authorList>
    </citation>
    <scope>GENE FAMILY</scope>
    <scope>NOMENCLATURE</scope>
</reference>
<reference key="6">
    <citation type="journal article" date="2008" name="J. Proteome Res.">
        <title>Site-specific phosphorylation profiling of Arabidopsis proteins by mass spectrometry and peptide chip analysis.</title>
        <authorList>
            <person name="de la Fuente van Bentem S."/>
            <person name="Anrather D."/>
            <person name="Dohnal I."/>
            <person name="Roitinger E."/>
            <person name="Csaszar E."/>
            <person name="Joore J."/>
            <person name="Buijnink J."/>
            <person name="Carreri A."/>
            <person name="Forzani C."/>
            <person name="Lorkovic Z.J."/>
            <person name="Barta A."/>
            <person name="Lecourieux D."/>
            <person name="Verhounig A."/>
            <person name="Jonak C."/>
            <person name="Hirt H."/>
        </authorList>
    </citation>
    <scope>PHOSPHORYLATION [LARGE SCALE ANALYSIS] AT THR-443</scope>
    <scope>IDENTIFICATION BY MASS SPECTROMETRY [LARGE SCALE ANALYSIS]</scope>
    <source>
        <tissue>Root</tissue>
    </source>
</reference>
<reference key="7">
    <citation type="journal article" date="2009" name="J. Proteomics">
        <title>Phosphoproteomic analysis of nuclei-enriched fractions from Arabidopsis thaliana.</title>
        <authorList>
            <person name="Jones A.M.E."/>
            <person name="MacLean D."/>
            <person name="Studholme D.J."/>
            <person name="Serna-Sanz A."/>
            <person name="Andreasson E."/>
            <person name="Rathjen J.P."/>
            <person name="Peck S.C."/>
        </authorList>
    </citation>
    <scope>PHOSPHORYLATION [LARGE SCALE ANALYSIS] AT THR-443</scope>
    <scope>IDENTIFICATION BY MASS SPECTROMETRY [LARGE SCALE ANALYSIS]</scope>
    <source>
        <strain>cv. Columbia</strain>
    </source>
</reference>
<reference key="8">
    <citation type="journal article" date="2009" name="Plant Physiol.">
        <title>Large-scale Arabidopsis phosphoproteome profiling reveals novel chloroplast kinase substrates and phosphorylation networks.</title>
        <authorList>
            <person name="Reiland S."/>
            <person name="Messerli G."/>
            <person name="Baerenfaller K."/>
            <person name="Gerrits B."/>
            <person name="Endler A."/>
            <person name="Grossmann J."/>
            <person name="Gruissem W."/>
            <person name="Baginsky S."/>
        </authorList>
    </citation>
    <scope>PHOSPHORYLATION [LARGE SCALE ANALYSIS] AT THR-443</scope>
    <scope>IDENTIFICATION BY MASS SPECTROMETRY [LARGE SCALE ANALYSIS]</scope>
</reference>
<reference key="9">
    <citation type="journal article" date="2011" name="Plant Physiol.">
        <title>The cytosolic kinases STY8, STY17, and STY46 are involved in chloroplast differentiation in Arabidopsis.</title>
        <authorList>
            <person name="Lamberti G."/>
            <person name="Gugel I.L."/>
            <person name="Meurer J."/>
            <person name="Soll J."/>
            <person name="Schwenkert S."/>
        </authorList>
    </citation>
    <scope>FUNCTION</scope>
    <scope>ACTIVITY REGULATION</scope>
    <scope>SUBCELLULAR LOCATION</scope>
    <scope>PHOSPHORYLATION AT THR-443</scope>
    <scope>MUTAGENESIS OF THR-443</scope>
    <scope>DISRUPTION PHENOTYPE</scope>
</reference>
<evidence type="ECO:0000255" key="1">
    <source>
        <dbReference type="PROSITE-ProRule" id="PRU00159"/>
    </source>
</evidence>
<evidence type="ECO:0000255" key="2">
    <source>
        <dbReference type="PROSITE-ProRule" id="PRU01007"/>
    </source>
</evidence>
<evidence type="ECO:0000256" key="3">
    <source>
        <dbReference type="SAM" id="MobiDB-lite"/>
    </source>
</evidence>
<evidence type="ECO:0000269" key="4">
    <source>
    </source>
</evidence>
<evidence type="ECO:0000269" key="5">
    <source>
    </source>
</evidence>
<evidence type="ECO:0000303" key="6">
    <source>
    </source>
</evidence>
<evidence type="ECO:0000305" key="7"/>
<evidence type="ECO:0000312" key="8">
    <source>
        <dbReference type="Araport" id="AT4G38470"/>
    </source>
</evidence>
<evidence type="ECO:0000312" key="9">
    <source>
        <dbReference type="EMBL" id="CAB37503.1"/>
    </source>
</evidence>
<evidence type="ECO:0007744" key="10">
    <source>
    </source>
</evidence>
<evidence type="ECO:0007744" key="11">
    <source>
    </source>
</evidence>
<evidence type="ECO:0007744" key="12">
    <source>
    </source>
</evidence>
<keyword id="KW-0067">ATP-binding</keyword>
<keyword id="KW-0963">Cytoplasm</keyword>
<keyword id="KW-0418">Kinase</keyword>
<keyword id="KW-0547">Nucleotide-binding</keyword>
<keyword id="KW-0597">Phosphoprotein</keyword>
<keyword id="KW-1185">Reference proteome</keyword>
<keyword id="KW-0723">Serine/threonine-protein kinase</keyword>
<keyword id="KW-0808">Transferase</keyword>
<protein>
    <recommendedName>
        <fullName evidence="7">Serine/threonine-protein kinase STY46</fullName>
        <ecNumber evidence="4">2.7.11.1</ecNumber>
    </recommendedName>
    <alternativeName>
        <fullName evidence="6">Serine/threonine/tyrosine-protein kinase 46</fullName>
    </alternativeName>
</protein>
<name>STY46_ARATH</name>
<sequence>MVMEDNESCASRVIFDALPTSQATMDRRERIKMEVFDEVLRRLRQSDIEDAHLPGFEDDLWNHFNRLPARYALDVNVERAEDVLMHKRLLHSAYDPQNRPAIEVHLVQVQPAGISADLDSTSNDAGHSSPTRKSIHPPPAFGSSPNLEALALAASLSQDEDADNSVHNNSLYSRPLHEITFSTEDKPKLLFQLTALLAELGLNIQEAHAFSTTDGYSLDVFVVDGWPYEETERLRISLEKEAAKIELQSQSWPMQQSFSPEKENGQTGARTHVPIPNDGTDVWEINLKHLKFGHKIASGSYGDLYKGTYCSQEVAIKVLKPERLDSDLEKEFAQEVFIMRKVRHKNVVQFIGACTKPPHLCIVTEFMPGGSVYDYLHKQKGVFKLPTLFKVAIDICKGMSYLHQNNIIHRDLKAANLLMDENEVVKVADFGVARVKAQTGVMTAETGTYRWMAPEVIEHKPYDHKADVFSYGIVLWELLTGKLPYEYMTPLQAAVGVVQKGLRPTIPKNTHPKLAELLERLWEHDSTQRPDFSEIIEQLQEIAKEVGEEGEEKKKSSTGLGGGIFAALRRSTTHH</sequence>
<proteinExistence type="evidence at protein level"/>
<dbReference type="EC" id="2.7.11.1" evidence="4"/>
<dbReference type="EMBL" id="AL035540">
    <property type="protein sequence ID" value="CAB37503.1"/>
    <property type="status" value="ALT_SEQ"/>
    <property type="molecule type" value="Genomic_DNA"/>
</dbReference>
<dbReference type="EMBL" id="AL161593">
    <property type="protein sequence ID" value="CAB80511.1"/>
    <property type="status" value="ALT_SEQ"/>
    <property type="molecule type" value="Genomic_DNA"/>
</dbReference>
<dbReference type="EMBL" id="CP002687">
    <property type="protein sequence ID" value="AEE86931.1"/>
    <property type="molecule type" value="Genomic_DNA"/>
</dbReference>
<dbReference type="EMBL" id="AK221091">
    <property type="protein sequence ID" value="BAD94956.1"/>
    <property type="status" value="ALT_INIT"/>
    <property type="molecule type" value="mRNA"/>
</dbReference>
<dbReference type="PIR" id="T05675">
    <property type="entry name" value="T05675"/>
</dbReference>
<dbReference type="RefSeq" id="NP_568041.1">
    <property type="nucleotide sequence ID" value="NM_120008.2"/>
</dbReference>
<dbReference type="SMR" id="F4JTP5"/>
<dbReference type="FunCoup" id="F4JTP5">
    <property type="interactions" value="296"/>
</dbReference>
<dbReference type="STRING" id="3702.F4JTP5"/>
<dbReference type="iPTMnet" id="F4JTP5"/>
<dbReference type="PaxDb" id="3702-AT4G38470.1"/>
<dbReference type="ProteomicsDB" id="228310"/>
<dbReference type="DNASU" id="830003"/>
<dbReference type="EnsemblPlants" id="AT4G38470.1">
    <property type="protein sequence ID" value="AT4G38470.1"/>
    <property type="gene ID" value="AT4G38470"/>
</dbReference>
<dbReference type="GeneID" id="830003"/>
<dbReference type="Gramene" id="AT4G38470.1">
    <property type="protein sequence ID" value="AT4G38470.1"/>
    <property type="gene ID" value="AT4G38470"/>
</dbReference>
<dbReference type="KEGG" id="ath:AT4G38470"/>
<dbReference type="Araport" id="AT4G38470"/>
<dbReference type="TAIR" id="AT4G38470">
    <property type="gene designation" value="STY46"/>
</dbReference>
<dbReference type="eggNOG" id="KOG0192">
    <property type="taxonomic scope" value="Eukaryota"/>
</dbReference>
<dbReference type="HOGENOM" id="CLU_000288_7_28_1"/>
<dbReference type="InParanoid" id="F4JTP5"/>
<dbReference type="OrthoDB" id="4062651at2759"/>
<dbReference type="SABIO-RK" id="F4JTP5"/>
<dbReference type="PRO" id="PR:F4JTP5"/>
<dbReference type="Proteomes" id="UP000006548">
    <property type="component" value="Chromosome 4"/>
</dbReference>
<dbReference type="ExpressionAtlas" id="F4JTP5">
    <property type="expression patterns" value="baseline and differential"/>
</dbReference>
<dbReference type="GO" id="GO:0005829">
    <property type="term" value="C:cytosol"/>
    <property type="evidence" value="ECO:0000314"/>
    <property type="project" value="TAIR"/>
</dbReference>
<dbReference type="GO" id="GO:0005524">
    <property type="term" value="F:ATP binding"/>
    <property type="evidence" value="ECO:0007669"/>
    <property type="project" value="UniProtKB-KW"/>
</dbReference>
<dbReference type="GO" id="GO:0106310">
    <property type="term" value="F:protein serine kinase activity"/>
    <property type="evidence" value="ECO:0007669"/>
    <property type="project" value="RHEA"/>
</dbReference>
<dbReference type="GO" id="GO:0004674">
    <property type="term" value="F:protein serine/threonine kinase activity"/>
    <property type="evidence" value="ECO:0000314"/>
    <property type="project" value="UniProtKB"/>
</dbReference>
<dbReference type="GO" id="GO:0004712">
    <property type="term" value="F:protein serine/threonine/tyrosine kinase activity"/>
    <property type="evidence" value="ECO:0000314"/>
    <property type="project" value="TAIR"/>
</dbReference>
<dbReference type="GO" id="GO:0071456">
    <property type="term" value="P:cellular response to hypoxia"/>
    <property type="evidence" value="ECO:0007007"/>
    <property type="project" value="TAIR"/>
</dbReference>
<dbReference type="GO" id="GO:0009658">
    <property type="term" value="P:chloroplast organization"/>
    <property type="evidence" value="ECO:0000316"/>
    <property type="project" value="TAIR"/>
</dbReference>
<dbReference type="GO" id="GO:0006468">
    <property type="term" value="P:protein phosphorylation"/>
    <property type="evidence" value="ECO:0000314"/>
    <property type="project" value="TAIR"/>
</dbReference>
<dbReference type="GO" id="GO:0009737">
    <property type="term" value="P:response to abscisic acid"/>
    <property type="evidence" value="ECO:0000270"/>
    <property type="project" value="TAIR"/>
</dbReference>
<dbReference type="CDD" id="cd13999">
    <property type="entry name" value="STKc_MAP3K-like"/>
    <property type="match status" value="1"/>
</dbReference>
<dbReference type="FunFam" id="1.10.510.10:FF:000316">
    <property type="entry name" value="serine/threonine-protein kinase HT1"/>
    <property type="match status" value="1"/>
</dbReference>
<dbReference type="FunFam" id="3.30.200.20:FF:000060">
    <property type="entry name" value="Serine/threonine-protein kinase isoform 1"/>
    <property type="match status" value="1"/>
</dbReference>
<dbReference type="Gene3D" id="3.30.70.260">
    <property type="match status" value="1"/>
</dbReference>
<dbReference type="Gene3D" id="3.30.200.20">
    <property type="entry name" value="Phosphorylase Kinase, domain 1"/>
    <property type="match status" value="1"/>
</dbReference>
<dbReference type="Gene3D" id="1.10.510.10">
    <property type="entry name" value="Transferase(Phosphotransferase) domain 1"/>
    <property type="match status" value="1"/>
</dbReference>
<dbReference type="InterPro" id="IPR045865">
    <property type="entry name" value="ACT-like_dom_sf"/>
</dbReference>
<dbReference type="InterPro" id="IPR002912">
    <property type="entry name" value="ACT_dom"/>
</dbReference>
<dbReference type="InterPro" id="IPR011009">
    <property type="entry name" value="Kinase-like_dom_sf"/>
</dbReference>
<dbReference type="InterPro" id="IPR000719">
    <property type="entry name" value="Prot_kinase_dom"/>
</dbReference>
<dbReference type="InterPro" id="IPR001245">
    <property type="entry name" value="Ser-Thr/Tyr_kinase_cat_dom"/>
</dbReference>
<dbReference type="InterPro" id="IPR008271">
    <property type="entry name" value="Ser/Thr_kinase_AS"/>
</dbReference>
<dbReference type="InterPro" id="IPR051681">
    <property type="entry name" value="Ser/Thr_Kinases-Pseudokinases"/>
</dbReference>
<dbReference type="PANTHER" id="PTHR44329">
    <property type="entry name" value="SERINE/THREONINE-PROTEIN KINASE TNNI3K-RELATED"/>
    <property type="match status" value="1"/>
</dbReference>
<dbReference type="PANTHER" id="PTHR44329:SF128">
    <property type="entry name" value="SERINE_THREONINE-PROTEIN KINASE STY46"/>
    <property type="match status" value="1"/>
</dbReference>
<dbReference type="Pfam" id="PF01842">
    <property type="entry name" value="ACT"/>
    <property type="match status" value="1"/>
</dbReference>
<dbReference type="Pfam" id="PF07714">
    <property type="entry name" value="PK_Tyr_Ser-Thr"/>
    <property type="match status" value="1"/>
</dbReference>
<dbReference type="PRINTS" id="PR00109">
    <property type="entry name" value="TYRKINASE"/>
</dbReference>
<dbReference type="SMART" id="SM00220">
    <property type="entry name" value="S_TKc"/>
    <property type="match status" value="1"/>
</dbReference>
<dbReference type="SUPFAM" id="SSF55021">
    <property type="entry name" value="ACT-like"/>
    <property type="match status" value="1"/>
</dbReference>
<dbReference type="SUPFAM" id="SSF56112">
    <property type="entry name" value="Protein kinase-like (PK-like)"/>
    <property type="match status" value="1"/>
</dbReference>
<dbReference type="PROSITE" id="PS51671">
    <property type="entry name" value="ACT"/>
    <property type="match status" value="1"/>
</dbReference>
<dbReference type="PROSITE" id="PS50011">
    <property type="entry name" value="PROTEIN_KINASE_DOM"/>
    <property type="match status" value="1"/>
</dbReference>
<dbReference type="PROSITE" id="PS00108">
    <property type="entry name" value="PROTEIN_KINASE_ST"/>
    <property type="match status" value="1"/>
</dbReference>
<accession>F4JTP5</accession>
<accession>Q56Z78</accession>
<accession>Q9SZM7</accession>
<organism>
    <name type="scientific">Arabidopsis thaliana</name>
    <name type="common">Mouse-ear cress</name>
    <dbReference type="NCBI Taxonomy" id="3702"/>
    <lineage>
        <taxon>Eukaryota</taxon>
        <taxon>Viridiplantae</taxon>
        <taxon>Streptophyta</taxon>
        <taxon>Embryophyta</taxon>
        <taxon>Tracheophyta</taxon>
        <taxon>Spermatophyta</taxon>
        <taxon>Magnoliopsida</taxon>
        <taxon>eudicotyledons</taxon>
        <taxon>Gunneridae</taxon>
        <taxon>Pentapetalae</taxon>
        <taxon>rosids</taxon>
        <taxon>malvids</taxon>
        <taxon>Brassicales</taxon>
        <taxon>Brassicaceae</taxon>
        <taxon>Camelineae</taxon>
        <taxon>Arabidopsis</taxon>
    </lineage>
</organism>
<gene>
    <name evidence="6" type="primary">STY46</name>
    <name evidence="8" type="ordered locus">At4g38470</name>
    <name evidence="9" type="ORF">F20M13.30</name>
</gene>